<feature type="chain" id="PRO_0000097435" description="Putative replication protein XF_b0001">
    <location>
        <begin position="1"/>
        <end position="283"/>
    </location>
</feature>
<sequence length="283" mass="32004">MPVITVYRHGGKGGVAPMNSSHIRTPRGEVQGWSPGAVRRNTEFLMSVREDQLTGAGLALTLTVRDCPPTAQEWQKIRRAWEARMRRAGMIRVHWVTEWQRRGVPHLHCAIWFSGTVYDVLLCVDAWLAVASSCGAGLRGQHGRIIDGVVGWFQYVSKHAARGVRHYQRCSENLPEGWKGLTGRVWGKGGYWPVSDALRIDLQDHRERGDGGYFAYRRLVRSWRVSDARSSGDRYRLRSARRMLTCSDTSRSRAIGFMEWVPLEVMLAFCANLAGRGYSVTSE</sequence>
<reference key="1">
    <citation type="journal article" date="2000" name="Nature">
        <title>The genome sequence of the plant pathogen Xylella fastidiosa.</title>
        <authorList>
            <person name="Simpson A.J.G."/>
            <person name="Reinach F.C."/>
            <person name="Arruda P."/>
            <person name="Abreu F.A."/>
            <person name="Acencio M."/>
            <person name="Alvarenga R."/>
            <person name="Alves L.M.C."/>
            <person name="Araya J.E."/>
            <person name="Baia G.S."/>
            <person name="Baptista C.S."/>
            <person name="Barros M.H."/>
            <person name="Bonaccorsi E.D."/>
            <person name="Bordin S."/>
            <person name="Bove J.M."/>
            <person name="Briones M.R.S."/>
            <person name="Bueno M.R.P."/>
            <person name="Camargo A.A."/>
            <person name="Camargo L.E.A."/>
            <person name="Carraro D.M."/>
            <person name="Carrer H."/>
            <person name="Colauto N.B."/>
            <person name="Colombo C."/>
            <person name="Costa F.F."/>
            <person name="Costa M.C.R."/>
            <person name="Costa-Neto C.M."/>
            <person name="Coutinho L.L."/>
            <person name="Cristofani M."/>
            <person name="Dias-Neto E."/>
            <person name="Docena C."/>
            <person name="El-Dorry H."/>
            <person name="Facincani A.P."/>
            <person name="Ferreira A.J.S."/>
            <person name="Ferreira V.C.A."/>
            <person name="Ferro J.A."/>
            <person name="Fraga J.S."/>
            <person name="Franca S.C."/>
            <person name="Franco M.C."/>
            <person name="Frohme M."/>
            <person name="Furlan L.R."/>
            <person name="Garnier M."/>
            <person name="Goldman G.H."/>
            <person name="Goldman M.H.S."/>
            <person name="Gomes S.L."/>
            <person name="Gruber A."/>
            <person name="Ho P.L."/>
            <person name="Hoheisel J.D."/>
            <person name="Junqueira M.L."/>
            <person name="Kemper E.L."/>
            <person name="Kitajima J.P."/>
            <person name="Krieger J.E."/>
            <person name="Kuramae E.E."/>
            <person name="Laigret F."/>
            <person name="Lambais M.R."/>
            <person name="Leite L.C.C."/>
            <person name="Lemos E.G.M."/>
            <person name="Lemos M.V.F."/>
            <person name="Lopes S.A."/>
            <person name="Lopes C.R."/>
            <person name="Machado J.A."/>
            <person name="Machado M.A."/>
            <person name="Madeira A.M.B.N."/>
            <person name="Madeira H.M.F."/>
            <person name="Marino C.L."/>
            <person name="Marques M.V."/>
            <person name="Martins E.A.L."/>
            <person name="Martins E.M.F."/>
            <person name="Matsukuma A.Y."/>
            <person name="Menck C.F.M."/>
            <person name="Miracca E.C."/>
            <person name="Miyaki C.Y."/>
            <person name="Monteiro-Vitorello C.B."/>
            <person name="Moon D.H."/>
            <person name="Nagai M.A."/>
            <person name="Nascimento A.L.T.O."/>
            <person name="Netto L.E.S."/>
            <person name="Nhani A. Jr."/>
            <person name="Nobrega F.G."/>
            <person name="Nunes L.R."/>
            <person name="Oliveira M.A."/>
            <person name="de Oliveira M.C."/>
            <person name="de Oliveira R.C."/>
            <person name="Palmieri D.A."/>
            <person name="Paris A."/>
            <person name="Peixoto B.R."/>
            <person name="Pereira G.A.G."/>
            <person name="Pereira H.A. Jr."/>
            <person name="Pesquero J.B."/>
            <person name="Quaggio R.B."/>
            <person name="Roberto P.G."/>
            <person name="Rodrigues V."/>
            <person name="de Rosa A.J.M."/>
            <person name="de Rosa V.E. Jr."/>
            <person name="de Sa R.G."/>
            <person name="Santelli R.V."/>
            <person name="Sawasaki H.E."/>
            <person name="da Silva A.C.R."/>
            <person name="da Silva A.M."/>
            <person name="da Silva F.R."/>
            <person name="Silva W.A. Jr."/>
            <person name="da Silveira J.F."/>
            <person name="Silvestri M.L.Z."/>
            <person name="Siqueira W.J."/>
            <person name="de Souza A.A."/>
            <person name="de Souza A.P."/>
            <person name="Terenzi M.F."/>
            <person name="Truffi D."/>
            <person name="Tsai S.M."/>
            <person name="Tsuhako M.H."/>
            <person name="Vallada H."/>
            <person name="Van Sluys M.A."/>
            <person name="Verjovski-Almeida S."/>
            <person name="Vettore A.L."/>
            <person name="Zago M.A."/>
            <person name="Zatz M."/>
            <person name="Meidanis J."/>
            <person name="Setubal J.C."/>
        </authorList>
    </citation>
    <scope>NUCLEOTIDE SEQUENCE [LARGE SCALE GENOMIC DNA]</scope>
    <source>
        <strain>9a5c</strain>
    </source>
</reference>
<accession>Q9PHK6</accession>
<protein>
    <recommendedName>
        <fullName>Putative replication protein XF_b0001</fullName>
    </recommendedName>
</protein>
<geneLocation type="plasmid">
    <name>pXF1.3</name>
</geneLocation>
<name>RPP_XYLFA</name>
<gene>
    <name type="ordered locus">XF_b0001</name>
</gene>
<dbReference type="EMBL" id="AE003850">
    <property type="protein sequence ID" value="AAF85568.1"/>
    <property type="molecule type" value="Genomic_DNA"/>
</dbReference>
<dbReference type="PIR" id="G82860">
    <property type="entry name" value="G82860"/>
</dbReference>
<dbReference type="KEGG" id="xfa:XF_b0001"/>
<dbReference type="HOGENOM" id="CLU_983357_0_0_6"/>
<dbReference type="Proteomes" id="UP000000812">
    <property type="component" value="Plasmid pXF1.3"/>
</dbReference>
<dbReference type="GO" id="GO:0006260">
    <property type="term" value="P:DNA replication"/>
    <property type="evidence" value="ECO:0007669"/>
    <property type="project" value="UniProtKB-KW"/>
</dbReference>
<dbReference type="InterPro" id="IPR056906">
    <property type="entry name" value="ORF2/G2P_dom"/>
</dbReference>
<dbReference type="Pfam" id="PF23343">
    <property type="entry name" value="REP_ORF2-G2P"/>
    <property type="match status" value="1"/>
</dbReference>
<organism>
    <name type="scientific">Xylella fastidiosa (strain 9a5c)</name>
    <dbReference type="NCBI Taxonomy" id="160492"/>
    <lineage>
        <taxon>Bacteria</taxon>
        <taxon>Pseudomonadati</taxon>
        <taxon>Pseudomonadota</taxon>
        <taxon>Gammaproteobacteria</taxon>
        <taxon>Lysobacterales</taxon>
        <taxon>Lysobacteraceae</taxon>
        <taxon>Xylella</taxon>
    </lineage>
</organism>
<proteinExistence type="predicted"/>
<keyword id="KW-0235">DNA replication</keyword>
<keyword id="KW-0614">Plasmid</keyword>